<keyword id="KW-0378">Hydrolase</keyword>
<sequence>MPDLAHVIREISEEMAQRSDRGAVADYIPELARVDPDQFGMAVIDAEGQVFTGGDSETPFSIQSVSKVFTLTLALGMVGDRLWKRVGREPSGNPFNSIVQLERERGVPRNPFINAGAIAVTDVILSGHEPREALGEILRFMQFLAQDSGIIIDETVAASEKRTGFRNTALANYMKSFGVIDNPVDYTLGVYFHHCAIAMNCRQLARAGRFLAHNGVNPSTGHSVVSAERARRINAIMLTCGHYDGSGEFAYRVGLPGKSGVGGSILAIAPGKASIAVWSPGLDAAGNSHLGRIALERLTQRMGWSVFGA</sequence>
<comment type="catalytic activity">
    <reaction evidence="1">
        <text>L-glutamine + H2O = L-glutamate + NH4(+)</text>
        <dbReference type="Rhea" id="RHEA:15889"/>
        <dbReference type="ChEBI" id="CHEBI:15377"/>
        <dbReference type="ChEBI" id="CHEBI:28938"/>
        <dbReference type="ChEBI" id="CHEBI:29985"/>
        <dbReference type="ChEBI" id="CHEBI:58359"/>
        <dbReference type="EC" id="3.5.1.2"/>
    </reaction>
</comment>
<comment type="subunit">
    <text evidence="1">Homotetramer.</text>
</comment>
<comment type="similarity">
    <text evidence="1">Belongs to the glutaminase family.</text>
</comment>
<name>GLSA_METRJ</name>
<reference key="1">
    <citation type="submission" date="2008-03" db="EMBL/GenBank/DDBJ databases">
        <title>Complete sequence of chromosome of Methylobacterium radiotolerans JCM 2831.</title>
        <authorList>
            <consortium name="US DOE Joint Genome Institute"/>
            <person name="Copeland A."/>
            <person name="Lucas S."/>
            <person name="Lapidus A."/>
            <person name="Glavina del Rio T."/>
            <person name="Dalin E."/>
            <person name="Tice H."/>
            <person name="Bruce D."/>
            <person name="Goodwin L."/>
            <person name="Pitluck S."/>
            <person name="Kiss H."/>
            <person name="Brettin T."/>
            <person name="Detter J.C."/>
            <person name="Han C."/>
            <person name="Kuske C.R."/>
            <person name="Schmutz J."/>
            <person name="Larimer F."/>
            <person name="Land M."/>
            <person name="Hauser L."/>
            <person name="Kyrpides N."/>
            <person name="Mikhailova N."/>
            <person name="Marx C.J."/>
            <person name="Richardson P."/>
        </authorList>
    </citation>
    <scope>NUCLEOTIDE SEQUENCE [LARGE SCALE GENOMIC DNA]</scope>
    <source>
        <strain>ATCC 27329 / DSM 1819 / JCM 2831 / NBRC 15690 / NCIMB 10815 / 0-1</strain>
    </source>
</reference>
<feature type="chain" id="PRO_1000115698" description="Glutaminase">
    <location>
        <begin position="1"/>
        <end position="309"/>
    </location>
</feature>
<feature type="binding site" evidence="1">
    <location>
        <position position="64"/>
    </location>
    <ligand>
        <name>substrate</name>
    </ligand>
</feature>
<feature type="binding site" evidence="1">
    <location>
        <position position="114"/>
    </location>
    <ligand>
        <name>substrate</name>
    </ligand>
</feature>
<feature type="binding site" evidence="1">
    <location>
        <position position="160"/>
    </location>
    <ligand>
        <name>substrate</name>
    </ligand>
</feature>
<feature type="binding site" evidence="1">
    <location>
        <position position="167"/>
    </location>
    <ligand>
        <name>substrate</name>
    </ligand>
</feature>
<feature type="binding site" evidence="1">
    <location>
        <position position="191"/>
    </location>
    <ligand>
        <name>substrate</name>
    </ligand>
</feature>
<feature type="binding site" evidence="1">
    <location>
        <position position="243"/>
    </location>
    <ligand>
        <name>substrate</name>
    </ligand>
</feature>
<feature type="binding site" evidence="1">
    <location>
        <position position="261"/>
    </location>
    <ligand>
        <name>substrate</name>
    </ligand>
</feature>
<accession>B1LUS0</accession>
<organism>
    <name type="scientific">Methylobacterium radiotolerans (strain ATCC 27329 / DSM 1819 / JCM 2831 / NBRC 15690 / NCIMB 10815 / 0-1)</name>
    <dbReference type="NCBI Taxonomy" id="426355"/>
    <lineage>
        <taxon>Bacteria</taxon>
        <taxon>Pseudomonadati</taxon>
        <taxon>Pseudomonadota</taxon>
        <taxon>Alphaproteobacteria</taxon>
        <taxon>Hyphomicrobiales</taxon>
        <taxon>Methylobacteriaceae</taxon>
        <taxon>Methylobacterium</taxon>
    </lineage>
</organism>
<proteinExistence type="inferred from homology"/>
<evidence type="ECO:0000255" key="1">
    <source>
        <dbReference type="HAMAP-Rule" id="MF_00313"/>
    </source>
</evidence>
<gene>
    <name evidence="1" type="primary">glsA</name>
    <name type="ordered locus">Mrad2831_3529</name>
</gene>
<dbReference type="EC" id="3.5.1.2" evidence="1"/>
<dbReference type="EMBL" id="CP001001">
    <property type="protein sequence ID" value="ACB25506.1"/>
    <property type="molecule type" value="Genomic_DNA"/>
</dbReference>
<dbReference type="RefSeq" id="WP_012320467.1">
    <property type="nucleotide sequence ID" value="NC_010505.1"/>
</dbReference>
<dbReference type="SMR" id="B1LUS0"/>
<dbReference type="STRING" id="426355.Mrad2831_3529"/>
<dbReference type="GeneID" id="6139582"/>
<dbReference type="KEGG" id="mrd:Mrad2831_3529"/>
<dbReference type="eggNOG" id="COG2066">
    <property type="taxonomic scope" value="Bacteria"/>
</dbReference>
<dbReference type="HOGENOM" id="CLU_027932_1_1_5"/>
<dbReference type="OrthoDB" id="9788822at2"/>
<dbReference type="Proteomes" id="UP000006589">
    <property type="component" value="Chromosome"/>
</dbReference>
<dbReference type="GO" id="GO:0004359">
    <property type="term" value="F:glutaminase activity"/>
    <property type="evidence" value="ECO:0007669"/>
    <property type="project" value="UniProtKB-UniRule"/>
</dbReference>
<dbReference type="GO" id="GO:0006537">
    <property type="term" value="P:glutamate biosynthetic process"/>
    <property type="evidence" value="ECO:0007669"/>
    <property type="project" value="TreeGrafter"/>
</dbReference>
<dbReference type="GO" id="GO:0006543">
    <property type="term" value="P:glutamine catabolic process"/>
    <property type="evidence" value="ECO:0007669"/>
    <property type="project" value="TreeGrafter"/>
</dbReference>
<dbReference type="FunFam" id="3.40.710.10:FF:000005">
    <property type="entry name" value="Glutaminase"/>
    <property type="match status" value="1"/>
</dbReference>
<dbReference type="Gene3D" id="3.40.710.10">
    <property type="entry name" value="DD-peptidase/beta-lactamase superfamily"/>
    <property type="match status" value="1"/>
</dbReference>
<dbReference type="HAMAP" id="MF_00313">
    <property type="entry name" value="Glutaminase"/>
    <property type="match status" value="1"/>
</dbReference>
<dbReference type="InterPro" id="IPR012338">
    <property type="entry name" value="Beta-lactam/transpept-like"/>
</dbReference>
<dbReference type="InterPro" id="IPR015868">
    <property type="entry name" value="Glutaminase"/>
</dbReference>
<dbReference type="NCBIfam" id="TIGR03814">
    <property type="entry name" value="Gln_ase"/>
    <property type="match status" value="1"/>
</dbReference>
<dbReference type="NCBIfam" id="NF002133">
    <property type="entry name" value="PRK00971.1-2"/>
    <property type="match status" value="1"/>
</dbReference>
<dbReference type="PANTHER" id="PTHR12544">
    <property type="entry name" value="GLUTAMINASE"/>
    <property type="match status" value="1"/>
</dbReference>
<dbReference type="PANTHER" id="PTHR12544:SF29">
    <property type="entry name" value="GLUTAMINASE"/>
    <property type="match status" value="1"/>
</dbReference>
<dbReference type="Pfam" id="PF04960">
    <property type="entry name" value="Glutaminase"/>
    <property type="match status" value="1"/>
</dbReference>
<dbReference type="SUPFAM" id="SSF56601">
    <property type="entry name" value="beta-lactamase/transpeptidase-like"/>
    <property type="match status" value="1"/>
</dbReference>
<protein>
    <recommendedName>
        <fullName evidence="1">Glutaminase</fullName>
        <ecNumber evidence="1">3.5.1.2</ecNumber>
    </recommendedName>
</protein>